<proteinExistence type="inferred from homology"/>
<sequence length="491" mass="53345">MNTQQLAKLRSIVPEMRRVRHIHFVGIGGAGMGGIAEVLANEGYQISGSDLAPNPVTQQLASLGATIYFNHRPENVRDASVVVVSSAISSDNPEIVAAHEARIPVIRRAEMLAELMRFRHGIAVAGTHGKTTTTAMVSSIYAEAGLDPTFVNGGLVKAAGVHARLGHSRYLIAEADESDASFLHLQPMVAIVTNIEADHMDTYQGDFENLKQTFINFLHNLPFYGRAVMCVDDPVIRELLPRVGRQTTTYGFSEDADVRVESYTQTGAQGHFTLARQDKELLHVTLNAPGRHNALNAAAAVAVATEEGIEDDDILRALESFQGTGRRFDFLGEYPLEPVNGKSGTAMLVDDYGHHPTEVDATIKAARAGWPDKNLVMLFQPHRYTRTRDLYDDFANVLCQVDALLMLDVYAAGEMPIPGADSRSLCRTIRGRGKVDPILVSDPAQAAEMLAQVLTGNDLILIQGAGNIGKIARNLSEIKLKPQTSGDEHHG</sequence>
<gene>
    <name evidence="1" type="primary">murC</name>
    <name type="ordered locus">Ent638_0637</name>
</gene>
<dbReference type="EC" id="6.3.2.8" evidence="1"/>
<dbReference type="EMBL" id="CP000653">
    <property type="protein sequence ID" value="ABP59324.1"/>
    <property type="molecule type" value="Genomic_DNA"/>
</dbReference>
<dbReference type="RefSeq" id="WP_012016046.1">
    <property type="nucleotide sequence ID" value="NC_009436.1"/>
</dbReference>
<dbReference type="SMR" id="A4W6J4"/>
<dbReference type="STRING" id="399742.Ent638_0637"/>
<dbReference type="KEGG" id="ent:Ent638_0637"/>
<dbReference type="eggNOG" id="COG0773">
    <property type="taxonomic scope" value="Bacteria"/>
</dbReference>
<dbReference type="HOGENOM" id="CLU_028104_2_2_6"/>
<dbReference type="OrthoDB" id="9804126at2"/>
<dbReference type="UniPathway" id="UPA00219"/>
<dbReference type="Proteomes" id="UP000000230">
    <property type="component" value="Chromosome"/>
</dbReference>
<dbReference type="GO" id="GO:0005737">
    <property type="term" value="C:cytoplasm"/>
    <property type="evidence" value="ECO:0007669"/>
    <property type="project" value="UniProtKB-SubCell"/>
</dbReference>
<dbReference type="GO" id="GO:0005524">
    <property type="term" value="F:ATP binding"/>
    <property type="evidence" value="ECO:0007669"/>
    <property type="project" value="UniProtKB-UniRule"/>
</dbReference>
<dbReference type="GO" id="GO:0008763">
    <property type="term" value="F:UDP-N-acetylmuramate-L-alanine ligase activity"/>
    <property type="evidence" value="ECO:0007669"/>
    <property type="project" value="UniProtKB-UniRule"/>
</dbReference>
<dbReference type="GO" id="GO:0051301">
    <property type="term" value="P:cell division"/>
    <property type="evidence" value="ECO:0007669"/>
    <property type="project" value="UniProtKB-KW"/>
</dbReference>
<dbReference type="GO" id="GO:0071555">
    <property type="term" value="P:cell wall organization"/>
    <property type="evidence" value="ECO:0007669"/>
    <property type="project" value="UniProtKB-KW"/>
</dbReference>
<dbReference type="GO" id="GO:0009252">
    <property type="term" value="P:peptidoglycan biosynthetic process"/>
    <property type="evidence" value="ECO:0007669"/>
    <property type="project" value="UniProtKB-UniRule"/>
</dbReference>
<dbReference type="GO" id="GO:0008360">
    <property type="term" value="P:regulation of cell shape"/>
    <property type="evidence" value="ECO:0007669"/>
    <property type="project" value="UniProtKB-KW"/>
</dbReference>
<dbReference type="FunFam" id="3.40.1190.10:FF:000001">
    <property type="entry name" value="UDP-N-acetylmuramate--L-alanine ligase"/>
    <property type="match status" value="1"/>
</dbReference>
<dbReference type="FunFam" id="3.40.50.720:FF:000046">
    <property type="entry name" value="UDP-N-acetylmuramate--L-alanine ligase"/>
    <property type="match status" value="1"/>
</dbReference>
<dbReference type="FunFam" id="3.90.190.20:FF:000001">
    <property type="entry name" value="UDP-N-acetylmuramate--L-alanine ligase"/>
    <property type="match status" value="1"/>
</dbReference>
<dbReference type="Gene3D" id="3.90.190.20">
    <property type="entry name" value="Mur ligase, C-terminal domain"/>
    <property type="match status" value="1"/>
</dbReference>
<dbReference type="Gene3D" id="3.40.1190.10">
    <property type="entry name" value="Mur-like, catalytic domain"/>
    <property type="match status" value="1"/>
</dbReference>
<dbReference type="Gene3D" id="3.40.50.720">
    <property type="entry name" value="NAD(P)-binding Rossmann-like Domain"/>
    <property type="match status" value="1"/>
</dbReference>
<dbReference type="HAMAP" id="MF_00046">
    <property type="entry name" value="MurC"/>
    <property type="match status" value="1"/>
</dbReference>
<dbReference type="InterPro" id="IPR036565">
    <property type="entry name" value="Mur-like_cat_sf"/>
</dbReference>
<dbReference type="InterPro" id="IPR004101">
    <property type="entry name" value="Mur_ligase_C"/>
</dbReference>
<dbReference type="InterPro" id="IPR036615">
    <property type="entry name" value="Mur_ligase_C_dom_sf"/>
</dbReference>
<dbReference type="InterPro" id="IPR013221">
    <property type="entry name" value="Mur_ligase_cen"/>
</dbReference>
<dbReference type="InterPro" id="IPR000713">
    <property type="entry name" value="Mur_ligase_N"/>
</dbReference>
<dbReference type="InterPro" id="IPR050061">
    <property type="entry name" value="MurCDEF_pg_biosynth"/>
</dbReference>
<dbReference type="InterPro" id="IPR005758">
    <property type="entry name" value="UDP-N-AcMur_Ala_ligase_MurC"/>
</dbReference>
<dbReference type="NCBIfam" id="TIGR01082">
    <property type="entry name" value="murC"/>
    <property type="match status" value="1"/>
</dbReference>
<dbReference type="PANTHER" id="PTHR43445:SF3">
    <property type="entry name" value="UDP-N-ACETYLMURAMATE--L-ALANINE LIGASE"/>
    <property type="match status" value="1"/>
</dbReference>
<dbReference type="PANTHER" id="PTHR43445">
    <property type="entry name" value="UDP-N-ACETYLMURAMATE--L-ALANINE LIGASE-RELATED"/>
    <property type="match status" value="1"/>
</dbReference>
<dbReference type="Pfam" id="PF01225">
    <property type="entry name" value="Mur_ligase"/>
    <property type="match status" value="1"/>
</dbReference>
<dbReference type="Pfam" id="PF02875">
    <property type="entry name" value="Mur_ligase_C"/>
    <property type="match status" value="1"/>
</dbReference>
<dbReference type="Pfam" id="PF08245">
    <property type="entry name" value="Mur_ligase_M"/>
    <property type="match status" value="1"/>
</dbReference>
<dbReference type="SUPFAM" id="SSF51984">
    <property type="entry name" value="MurCD N-terminal domain"/>
    <property type="match status" value="1"/>
</dbReference>
<dbReference type="SUPFAM" id="SSF53623">
    <property type="entry name" value="MurD-like peptide ligases, catalytic domain"/>
    <property type="match status" value="1"/>
</dbReference>
<dbReference type="SUPFAM" id="SSF53244">
    <property type="entry name" value="MurD-like peptide ligases, peptide-binding domain"/>
    <property type="match status" value="1"/>
</dbReference>
<organism>
    <name type="scientific">Enterobacter sp. (strain 638)</name>
    <dbReference type="NCBI Taxonomy" id="399742"/>
    <lineage>
        <taxon>Bacteria</taxon>
        <taxon>Pseudomonadati</taxon>
        <taxon>Pseudomonadota</taxon>
        <taxon>Gammaproteobacteria</taxon>
        <taxon>Enterobacterales</taxon>
        <taxon>Enterobacteriaceae</taxon>
        <taxon>Enterobacter</taxon>
    </lineage>
</organism>
<feature type="chain" id="PRO_1000057317" description="UDP-N-acetylmuramate--L-alanine ligase">
    <location>
        <begin position="1"/>
        <end position="491"/>
    </location>
</feature>
<feature type="binding site" evidence="1">
    <location>
        <begin position="126"/>
        <end position="132"/>
    </location>
    <ligand>
        <name>ATP</name>
        <dbReference type="ChEBI" id="CHEBI:30616"/>
    </ligand>
</feature>
<evidence type="ECO:0000255" key="1">
    <source>
        <dbReference type="HAMAP-Rule" id="MF_00046"/>
    </source>
</evidence>
<comment type="function">
    <text evidence="1">Cell wall formation.</text>
</comment>
<comment type="catalytic activity">
    <reaction evidence="1">
        <text>UDP-N-acetyl-alpha-D-muramate + L-alanine + ATP = UDP-N-acetyl-alpha-D-muramoyl-L-alanine + ADP + phosphate + H(+)</text>
        <dbReference type="Rhea" id="RHEA:23372"/>
        <dbReference type="ChEBI" id="CHEBI:15378"/>
        <dbReference type="ChEBI" id="CHEBI:30616"/>
        <dbReference type="ChEBI" id="CHEBI:43474"/>
        <dbReference type="ChEBI" id="CHEBI:57972"/>
        <dbReference type="ChEBI" id="CHEBI:70757"/>
        <dbReference type="ChEBI" id="CHEBI:83898"/>
        <dbReference type="ChEBI" id="CHEBI:456216"/>
        <dbReference type="EC" id="6.3.2.8"/>
    </reaction>
</comment>
<comment type="pathway">
    <text evidence="1">Cell wall biogenesis; peptidoglycan biosynthesis.</text>
</comment>
<comment type="subcellular location">
    <subcellularLocation>
        <location evidence="1">Cytoplasm</location>
    </subcellularLocation>
</comment>
<comment type="similarity">
    <text evidence="1">Belongs to the MurCDEF family.</text>
</comment>
<protein>
    <recommendedName>
        <fullName evidence="1">UDP-N-acetylmuramate--L-alanine ligase</fullName>
        <ecNumber evidence="1">6.3.2.8</ecNumber>
    </recommendedName>
    <alternativeName>
        <fullName evidence="1">UDP-N-acetylmuramoyl-L-alanine synthetase</fullName>
    </alternativeName>
</protein>
<name>MURC_ENT38</name>
<accession>A4W6J4</accession>
<keyword id="KW-0067">ATP-binding</keyword>
<keyword id="KW-0131">Cell cycle</keyword>
<keyword id="KW-0132">Cell division</keyword>
<keyword id="KW-0133">Cell shape</keyword>
<keyword id="KW-0961">Cell wall biogenesis/degradation</keyword>
<keyword id="KW-0963">Cytoplasm</keyword>
<keyword id="KW-0436">Ligase</keyword>
<keyword id="KW-0547">Nucleotide-binding</keyword>
<keyword id="KW-0573">Peptidoglycan synthesis</keyword>
<reference key="1">
    <citation type="journal article" date="2010" name="PLoS Genet.">
        <title>Genome sequence of the plant growth promoting endophytic bacterium Enterobacter sp. 638.</title>
        <authorList>
            <person name="Taghavi S."/>
            <person name="van der Lelie D."/>
            <person name="Hoffman A."/>
            <person name="Zhang Y.B."/>
            <person name="Walla M.D."/>
            <person name="Vangronsveld J."/>
            <person name="Newman L."/>
            <person name="Monchy S."/>
        </authorList>
    </citation>
    <scope>NUCLEOTIDE SEQUENCE [LARGE SCALE GENOMIC DNA]</scope>
    <source>
        <strain>638</strain>
    </source>
</reference>